<name>INI1_SCHPO</name>
<keyword id="KW-0507">mRNA processing</keyword>
<keyword id="KW-0508">mRNA splicing</keyword>
<keyword id="KW-0539">Nucleus</keyword>
<keyword id="KW-1185">Reference proteome</keyword>
<keyword id="KW-0747">Spliceosome</keyword>
<dbReference type="EMBL" id="AY279206">
    <property type="protein sequence ID" value="AAP30040.1"/>
    <property type="molecule type" value="mRNA"/>
</dbReference>
<dbReference type="EMBL" id="CU329670">
    <property type="protein sequence ID" value="CAB40798.2"/>
    <property type="molecule type" value="Genomic_DNA"/>
</dbReference>
<dbReference type="PIR" id="T38295">
    <property type="entry name" value="T38295"/>
</dbReference>
<dbReference type="RefSeq" id="NP_593792.1">
    <property type="nucleotide sequence ID" value="NM_001019221.2"/>
</dbReference>
<dbReference type="SMR" id="Q9UTB8"/>
<dbReference type="BioGRID" id="278334">
    <property type="interactions" value="8"/>
</dbReference>
<dbReference type="FunCoup" id="Q9UTB8">
    <property type="interactions" value="740"/>
</dbReference>
<dbReference type="STRING" id="284812.Q9UTB8"/>
<dbReference type="iPTMnet" id="Q9UTB8"/>
<dbReference type="PaxDb" id="4896-SPAC23H3.02c.1"/>
<dbReference type="EnsemblFungi" id="SPAC23H3.02c.1">
    <property type="protein sequence ID" value="SPAC23H3.02c.1:pep"/>
    <property type="gene ID" value="SPAC23H3.02c"/>
</dbReference>
<dbReference type="GeneID" id="2541843"/>
<dbReference type="KEGG" id="spo:2541843"/>
<dbReference type="PomBase" id="SPAC23H3.02c">
    <property type="gene designation" value="ini1"/>
</dbReference>
<dbReference type="VEuPathDB" id="FungiDB:SPAC23H3.02c"/>
<dbReference type="eggNOG" id="KOG1705">
    <property type="taxonomic scope" value="Eukaryota"/>
</dbReference>
<dbReference type="HOGENOM" id="CLU_110369_2_0_1"/>
<dbReference type="InParanoid" id="Q9UTB8"/>
<dbReference type="OMA" id="AYYCWEC"/>
<dbReference type="PhylomeDB" id="Q9UTB8"/>
<dbReference type="Reactome" id="R-SPO-72163">
    <property type="pathway name" value="mRNA Splicing - Major Pathway"/>
</dbReference>
<dbReference type="PRO" id="PR:Q9UTB8"/>
<dbReference type="Proteomes" id="UP000002485">
    <property type="component" value="Chromosome I"/>
</dbReference>
<dbReference type="GO" id="GO:0005829">
    <property type="term" value="C:cytosol"/>
    <property type="evidence" value="ECO:0007005"/>
    <property type="project" value="PomBase"/>
</dbReference>
<dbReference type="GO" id="GO:0005634">
    <property type="term" value="C:nucleus"/>
    <property type="evidence" value="ECO:0000314"/>
    <property type="project" value="PomBase"/>
</dbReference>
<dbReference type="GO" id="GO:0071011">
    <property type="term" value="C:precatalytic spliceosome"/>
    <property type="evidence" value="ECO:0000318"/>
    <property type="project" value="GO_Central"/>
</dbReference>
<dbReference type="GO" id="GO:0005686">
    <property type="term" value="C:U2 snRNP"/>
    <property type="evidence" value="ECO:0000314"/>
    <property type="project" value="PomBase"/>
</dbReference>
<dbReference type="GO" id="GO:0045292">
    <property type="term" value="P:mRNA cis splicing, via spliceosome"/>
    <property type="evidence" value="ECO:0000314"/>
    <property type="project" value="PomBase"/>
</dbReference>
<dbReference type="GO" id="GO:0000398">
    <property type="term" value="P:mRNA splicing, via spliceosome"/>
    <property type="evidence" value="ECO:0000318"/>
    <property type="project" value="GO_Central"/>
</dbReference>
<dbReference type="InterPro" id="IPR005345">
    <property type="entry name" value="PHF5"/>
</dbReference>
<dbReference type="PANTHER" id="PTHR13120">
    <property type="entry name" value="PHD FINGER-LIKE DOMAIN-CONTAINING PROTEIN 5A"/>
    <property type="match status" value="1"/>
</dbReference>
<dbReference type="Pfam" id="PF03660">
    <property type="entry name" value="PHF5"/>
    <property type="match status" value="1"/>
</dbReference>
<dbReference type="PIRSF" id="PIRSF016468">
    <property type="entry name" value="PHF5"/>
    <property type="match status" value="1"/>
</dbReference>
<organism>
    <name type="scientific">Schizosaccharomyces pombe (strain 972 / ATCC 24843)</name>
    <name type="common">Fission yeast</name>
    <dbReference type="NCBI Taxonomy" id="284812"/>
    <lineage>
        <taxon>Eukaryota</taxon>
        <taxon>Fungi</taxon>
        <taxon>Dikarya</taxon>
        <taxon>Ascomycota</taxon>
        <taxon>Taphrinomycotina</taxon>
        <taxon>Schizosaccharomycetes</taxon>
        <taxon>Schizosaccharomycetales</taxon>
        <taxon>Schizosaccharomycetaceae</taxon>
        <taxon>Schizosaccharomyces</taxon>
    </lineage>
</organism>
<evidence type="ECO:0000269" key="1">
    <source>
    </source>
</evidence>
<evidence type="ECO:0000305" key="2"/>
<gene>
    <name type="primary">ini1</name>
    <name type="ORF">SPAC23H3.02c</name>
</gene>
<protein>
    <recommendedName>
        <fullName>Pre-mRNA-splicing factor ini1</fullName>
    </recommendedName>
</protein>
<accession>Q9UTB8</accession>
<comment type="function">
    <text evidence="1">Required for pre-mRNA splicing.</text>
</comment>
<comment type="subcellular location">
    <subcellularLocation>
        <location evidence="1">Nucleus</location>
    </subcellularLocation>
</comment>
<comment type="similarity">
    <text evidence="2">Belongs to the PHF5 family.</text>
</comment>
<reference key="1">
    <citation type="journal article" date="2004" name="J. Cell Sci.">
        <title>A novel RING-finger-like protein Ini1 is essential for cell cycle progression in fission yeast.</title>
        <authorList>
            <person name="Oltra E."/>
            <person name="Verde F."/>
            <person name="Werner R."/>
            <person name="D'Urso G."/>
        </authorList>
    </citation>
    <scope>NUCLEOTIDE SEQUENCE [MRNA]</scope>
    <scope>FUNCTION</scope>
    <scope>SUBCELLULAR LOCATION</scope>
</reference>
<reference key="2">
    <citation type="journal article" date="2002" name="Nature">
        <title>The genome sequence of Schizosaccharomyces pombe.</title>
        <authorList>
            <person name="Wood V."/>
            <person name="Gwilliam R."/>
            <person name="Rajandream M.A."/>
            <person name="Lyne M.H."/>
            <person name="Lyne R."/>
            <person name="Stewart A."/>
            <person name="Sgouros J.G."/>
            <person name="Peat N."/>
            <person name="Hayles J."/>
            <person name="Baker S.G."/>
            <person name="Basham D."/>
            <person name="Bowman S."/>
            <person name="Brooks K."/>
            <person name="Brown D."/>
            <person name="Brown S."/>
            <person name="Chillingworth T."/>
            <person name="Churcher C.M."/>
            <person name="Collins M."/>
            <person name="Connor R."/>
            <person name="Cronin A."/>
            <person name="Davis P."/>
            <person name="Feltwell T."/>
            <person name="Fraser A."/>
            <person name="Gentles S."/>
            <person name="Goble A."/>
            <person name="Hamlin N."/>
            <person name="Harris D.E."/>
            <person name="Hidalgo J."/>
            <person name="Hodgson G."/>
            <person name="Holroyd S."/>
            <person name="Hornsby T."/>
            <person name="Howarth S."/>
            <person name="Huckle E.J."/>
            <person name="Hunt S."/>
            <person name="Jagels K."/>
            <person name="James K.D."/>
            <person name="Jones L."/>
            <person name="Jones M."/>
            <person name="Leather S."/>
            <person name="McDonald S."/>
            <person name="McLean J."/>
            <person name="Mooney P."/>
            <person name="Moule S."/>
            <person name="Mungall K.L."/>
            <person name="Murphy L.D."/>
            <person name="Niblett D."/>
            <person name="Odell C."/>
            <person name="Oliver K."/>
            <person name="O'Neil S."/>
            <person name="Pearson D."/>
            <person name="Quail M.A."/>
            <person name="Rabbinowitsch E."/>
            <person name="Rutherford K.M."/>
            <person name="Rutter S."/>
            <person name="Saunders D."/>
            <person name="Seeger K."/>
            <person name="Sharp S."/>
            <person name="Skelton J."/>
            <person name="Simmonds M.N."/>
            <person name="Squares R."/>
            <person name="Squares S."/>
            <person name="Stevens K."/>
            <person name="Taylor K."/>
            <person name="Taylor R.G."/>
            <person name="Tivey A."/>
            <person name="Walsh S.V."/>
            <person name="Warren T."/>
            <person name="Whitehead S."/>
            <person name="Woodward J.R."/>
            <person name="Volckaert G."/>
            <person name="Aert R."/>
            <person name="Robben J."/>
            <person name="Grymonprez B."/>
            <person name="Weltjens I."/>
            <person name="Vanstreels E."/>
            <person name="Rieger M."/>
            <person name="Schaefer M."/>
            <person name="Mueller-Auer S."/>
            <person name="Gabel C."/>
            <person name="Fuchs M."/>
            <person name="Duesterhoeft A."/>
            <person name="Fritzc C."/>
            <person name="Holzer E."/>
            <person name="Moestl D."/>
            <person name="Hilbert H."/>
            <person name="Borzym K."/>
            <person name="Langer I."/>
            <person name="Beck A."/>
            <person name="Lehrach H."/>
            <person name="Reinhardt R."/>
            <person name="Pohl T.M."/>
            <person name="Eger P."/>
            <person name="Zimmermann W."/>
            <person name="Wedler H."/>
            <person name="Wambutt R."/>
            <person name="Purnelle B."/>
            <person name="Goffeau A."/>
            <person name="Cadieu E."/>
            <person name="Dreano S."/>
            <person name="Gloux S."/>
            <person name="Lelaure V."/>
            <person name="Mottier S."/>
            <person name="Galibert F."/>
            <person name="Aves S.J."/>
            <person name="Xiang Z."/>
            <person name="Hunt C."/>
            <person name="Moore K."/>
            <person name="Hurst S.M."/>
            <person name="Lucas M."/>
            <person name="Rochet M."/>
            <person name="Gaillardin C."/>
            <person name="Tallada V.A."/>
            <person name="Garzon A."/>
            <person name="Thode G."/>
            <person name="Daga R.R."/>
            <person name="Cruzado L."/>
            <person name="Jimenez J."/>
            <person name="Sanchez M."/>
            <person name="del Rey F."/>
            <person name="Benito J."/>
            <person name="Dominguez A."/>
            <person name="Revuelta J.L."/>
            <person name="Moreno S."/>
            <person name="Armstrong J."/>
            <person name="Forsburg S.L."/>
            <person name="Cerutti L."/>
            <person name="Lowe T."/>
            <person name="McCombie W.R."/>
            <person name="Paulsen I."/>
            <person name="Potashkin J."/>
            <person name="Shpakovski G.V."/>
            <person name="Ussery D."/>
            <person name="Barrell B.G."/>
            <person name="Nurse P."/>
        </authorList>
    </citation>
    <scope>NUCLEOTIDE SEQUENCE [LARGE SCALE GENOMIC DNA]</scope>
    <source>
        <strain>972 / ATCC 24843</strain>
    </source>
</reference>
<sequence length="117" mass="13267">MSKHHPDLVLCRRQPGITVGKLCERCDEKCPICDSHVRPTTLVRICDECAFGSSQDRCIICGAPGVSDCYYCSECTRMEYDRDGCPRVINLGSSRTDWFYERKKFKNAGKEMPGATY</sequence>
<feature type="chain" id="PRO_0000218721" description="Pre-mRNA-splicing factor ini1">
    <location>
        <begin position="1"/>
        <end position="117"/>
    </location>
</feature>
<proteinExistence type="inferred from homology"/>